<name>BIOD_RHOPT</name>
<gene>
    <name evidence="1" type="primary">bioD</name>
    <name type="ordered locus">Rpal_3319</name>
</gene>
<proteinExistence type="inferred from homology"/>
<feature type="chain" id="PRO_1000119883" description="ATP-dependent dethiobiotin synthetase BioD">
    <location>
        <begin position="1"/>
        <end position="212"/>
    </location>
</feature>
<feature type="active site" evidence="1">
    <location>
        <position position="33"/>
    </location>
</feature>
<feature type="binding site" evidence="1">
    <location>
        <begin position="13"/>
        <end position="18"/>
    </location>
    <ligand>
        <name>ATP</name>
        <dbReference type="ChEBI" id="CHEBI:30616"/>
    </ligand>
</feature>
<feature type="binding site" evidence="1">
    <location>
        <position position="17"/>
    </location>
    <ligand>
        <name>Mg(2+)</name>
        <dbReference type="ChEBI" id="CHEBI:18420"/>
    </ligand>
</feature>
<feature type="binding site" evidence="1">
    <location>
        <position position="37"/>
    </location>
    <ligand>
        <name>substrate</name>
    </ligand>
</feature>
<feature type="binding site" evidence="1">
    <location>
        <begin position="100"/>
        <end position="103"/>
    </location>
    <ligand>
        <name>ATP</name>
        <dbReference type="ChEBI" id="CHEBI:30616"/>
    </ligand>
</feature>
<feature type="binding site" evidence="1">
    <location>
        <position position="100"/>
    </location>
    <ligand>
        <name>Mg(2+)</name>
        <dbReference type="ChEBI" id="CHEBI:18420"/>
    </ligand>
</feature>
<feature type="binding site" evidence="1">
    <location>
        <begin position="184"/>
        <end position="186"/>
    </location>
    <ligand>
        <name>ATP</name>
        <dbReference type="ChEBI" id="CHEBI:30616"/>
    </ligand>
</feature>
<reference key="1">
    <citation type="submission" date="2008-05" db="EMBL/GenBank/DDBJ databases">
        <title>Complete sequence of Rhodopseudomonas palustris TIE-1.</title>
        <authorList>
            <consortium name="US DOE Joint Genome Institute"/>
            <person name="Lucas S."/>
            <person name="Copeland A."/>
            <person name="Lapidus A."/>
            <person name="Glavina del Rio T."/>
            <person name="Dalin E."/>
            <person name="Tice H."/>
            <person name="Pitluck S."/>
            <person name="Chain P."/>
            <person name="Malfatti S."/>
            <person name="Shin M."/>
            <person name="Vergez L."/>
            <person name="Lang D."/>
            <person name="Schmutz J."/>
            <person name="Larimer F."/>
            <person name="Land M."/>
            <person name="Hauser L."/>
            <person name="Kyrpides N."/>
            <person name="Mikhailova N."/>
            <person name="Emerson D."/>
            <person name="Newman D.K."/>
            <person name="Roden E."/>
            <person name="Richardson P."/>
        </authorList>
    </citation>
    <scope>NUCLEOTIDE SEQUENCE [LARGE SCALE GENOMIC DNA]</scope>
    <source>
        <strain>TIE-1</strain>
    </source>
</reference>
<evidence type="ECO:0000255" key="1">
    <source>
        <dbReference type="HAMAP-Rule" id="MF_00336"/>
    </source>
</evidence>
<dbReference type="EC" id="6.3.3.3" evidence="1"/>
<dbReference type="EMBL" id="CP001096">
    <property type="protein sequence ID" value="ACF01821.1"/>
    <property type="molecule type" value="Genomic_DNA"/>
</dbReference>
<dbReference type="RefSeq" id="WP_012496391.1">
    <property type="nucleotide sequence ID" value="NC_011004.1"/>
</dbReference>
<dbReference type="SMR" id="B3Q7Q5"/>
<dbReference type="KEGG" id="rpt:Rpal_3319"/>
<dbReference type="HOGENOM" id="CLU_072551_2_0_5"/>
<dbReference type="OrthoDB" id="9802097at2"/>
<dbReference type="UniPathway" id="UPA00078">
    <property type="reaction ID" value="UER00161"/>
</dbReference>
<dbReference type="Proteomes" id="UP000001725">
    <property type="component" value="Chromosome"/>
</dbReference>
<dbReference type="GO" id="GO:0005829">
    <property type="term" value="C:cytosol"/>
    <property type="evidence" value="ECO:0007669"/>
    <property type="project" value="TreeGrafter"/>
</dbReference>
<dbReference type="GO" id="GO:0005524">
    <property type="term" value="F:ATP binding"/>
    <property type="evidence" value="ECO:0007669"/>
    <property type="project" value="UniProtKB-UniRule"/>
</dbReference>
<dbReference type="GO" id="GO:0004141">
    <property type="term" value="F:dethiobiotin synthase activity"/>
    <property type="evidence" value="ECO:0007669"/>
    <property type="project" value="UniProtKB-UniRule"/>
</dbReference>
<dbReference type="GO" id="GO:0000287">
    <property type="term" value="F:magnesium ion binding"/>
    <property type="evidence" value="ECO:0007669"/>
    <property type="project" value="UniProtKB-UniRule"/>
</dbReference>
<dbReference type="GO" id="GO:0009102">
    <property type="term" value="P:biotin biosynthetic process"/>
    <property type="evidence" value="ECO:0007669"/>
    <property type="project" value="UniProtKB-UniRule"/>
</dbReference>
<dbReference type="CDD" id="cd03109">
    <property type="entry name" value="DTBS"/>
    <property type="match status" value="1"/>
</dbReference>
<dbReference type="Gene3D" id="3.40.50.300">
    <property type="entry name" value="P-loop containing nucleotide triphosphate hydrolases"/>
    <property type="match status" value="1"/>
</dbReference>
<dbReference type="HAMAP" id="MF_00336">
    <property type="entry name" value="BioD"/>
    <property type="match status" value="1"/>
</dbReference>
<dbReference type="InterPro" id="IPR004472">
    <property type="entry name" value="DTB_synth_BioD"/>
</dbReference>
<dbReference type="InterPro" id="IPR027417">
    <property type="entry name" value="P-loop_NTPase"/>
</dbReference>
<dbReference type="NCBIfam" id="TIGR00347">
    <property type="entry name" value="bioD"/>
    <property type="match status" value="1"/>
</dbReference>
<dbReference type="PANTHER" id="PTHR43210:SF2">
    <property type="entry name" value="ATP-DEPENDENT DETHIOBIOTIN SYNTHETASE BIOD 2"/>
    <property type="match status" value="1"/>
</dbReference>
<dbReference type="PANTHER" id="PTHR43210">
    <property type="entry name" value="DETHIOBIOTIN SYNTHETASE"/>
    <property type="match status" value="1"/>
</dbReference>
<dbReference type="Pfam" id="PF13500">
    <property type="entry name" value="AAA_26"/>
    <property type="match status" value="1"/>
</dbReference>
<dbReference type="PIRSF" id="PIRSF006755">
    <property type="entry name" value="DTB_synth"/>
    <property type="match status" value="1"/>
</dbReference>
<dbReference type="SUPFAM" id="SSF52540">
    <property type="entry name" value="P-loop containing nucleoside triphosphate hydrolases"/>
    <property type="match status" value="1"/>
</dbReference>
<comment type="function">
    <text evidence="1">Catalyzes a mechanistically unusual reaction, the ATP-dependent insertion of CO2 between the N7 and N8 nitrogen atoms of 7,8-diaminopelargonic acid (DAPA, also called 7,8-diammoniononanoate) to form a ureido ring.</text>
</comment>
<comment type="catalytic activity">
    <reaction evidence="1">
        <text>(7R,8S)-7,8-diammoniononanoate + CO2 + ATP = (4R,5S)-dethiobiotin + ADP + phosphate + 3 H(+)</text>
        <dbReference type="Rhea" id="RHEA:15805"/>
        <dbReference type="ChEBI" id="CHEBI:15378"/>
        <dbReference type="ChEBI" id="CHEBI:16526"/>
        <dbReference type="ChEBI" id="CHEBI:30616"/>
        <dbReference type="ChEBI" id="CHEBI:43474"/>
        <dbReference type="ChEBI" id="CHEBI:149469"/>
        <dbReference type="ChEBI" id="CHEBI:149473"/>
        <dbReference type="ChEBI" id="CHEBI:456216"/>
        <dbReference type="EC" id="6.3.3.3"/>
    </reaction>
</comment>
<comment type="cofactor">
    <cofactor evidence="1">
        <name>Mg(2+)</name>
        <dbReference type="ChEBI" id="CHEBI:18420"/>
    </cofactor>
</comment>
<comment type="pathway">
    <text evidence="1">Cofactor biosynthesis; biotin biosynthesis; biotin from 7,8-diaminononanoate: step 1/2.</text>
</comment>
<comment type="subunit">
    <text evidence="1">Homodimer.</text>
</comment>
<comment type="subcellular location">
    <subcellularLocation>
        <location evidence="1">Cytoplasm</location>
    </subcellularLocation>
</comment>
<comment type="similarity">
    <text evidence="1">Belongs to the dethiobiotin synthetase family.</text>
</comment>
<accession>B3Q7Q5</accession>
<keyword id="KW-0067">ATP-binding</keyword>
<keyword id="KW-0093">Biotin biosynthesis</keyword>
<keyword id="KW-0963">Cytoplasm</keyword>
<keyword id="KW-0436">Ligase</keyword>
<keyword id="KW-0460">Magnesium</keyword>
<keyword id="KW-0479">Metal-binding</keyword>
<keyword id="KW-0547">Nucleotide-binding</keyword>
<protein>
    <recommendedName>
        <fullName evidence="1">ATP-dependent dethiobiotin synthetase BioD</fullName>
        <ecNumber evidence="1">6.3.3.3</ecNumber>
    </recommendedName>
    <alternativeName>
        <fullName evidence="1">DTB synthetase</fullName>
        <shortName evidence="1">DTBS</shortName>
    </alternativeName>
    <alternativeName>
        <fullName evidence="1">Dethiobiotin synthase</fullName>
    </alternativeName>
</protein>
<sequence>MSARIVVTGTDTGIGKTVFAAALAGALDATYWKPVQSGLEDETDSGAVQRLSGLAADRILPERYRLRTPASPHLAAEIDGVDIDVAALELPSVSRPLVVEGAGGLMVPLTRETTYIDVFARWAAPLVLCARTSLGTINHTLLSIEAIRARDIPLLGVAFLGDENLDSEQIIVELGHTRRLGRLPRLERLDAAALRAAFAAAFEPRDFLGDAP</sequence>
<organism>
    <name type="scientific">Rhodopseudomonas palustris (strain TIE-1)</name>
    <dbReference type="NCBI Taxonomy" id="395960"/>
    <lineage>
        <taxon>Bacteria</taxon>
        <taxon>Pseudomonadati</taxon>
        <taxon>Pseudomonadota</taxon>
        <taxon>Alphaproteobacteria</taxon>
        <taxon>Hyphomicrobiales</taxon>
        <taxon>Nitrobacteraceae</taxon>
        <taxon>Rhodopseudomonas</taxon>
    </lineage>
</organism>